<gene>
    <name evidence="1" type="primary">rpsH</name>
    <name type="ordered locus">Acid345_1240</name>
</gene>
<name>RS8_KORVE</name>
<dbReference type="EMBL" id="CP000360">
    <property type="protein sequence ID" value="ABF40242.1"/>
    <property type="molecule type" value="Genomic_DNA"/>
</dbReference>
<dbReference type="RefSeq" id="WP_011522044.1">
    <property type="nucleotide sequence ID" value="NC_008009.1"/>
</dbReference>
<dbReference type="SMR" id="Q1ISA8"/>
<dbReference type="STRING" id="204669.Acid345_1240"/>
<dbReference type="EnsemblBacteria" id="ABF40242">
    <property type="protein sequence ID" value="ABF40242"/>
    <property type="gene ID" value="Acid345_1240"/>
</dbReference>
<dbReference type="KEGG" id="aba:Acid345_1240"/>
<dbReference type="eggNOG" id="COG0096">
    <property type="taxonomic scope" value="Bacteria"/>
</dbReference>
<dbReference type="HOGENOM" id="CLU_098428_0_2_0"/>
<dbReference type="OrthoDB" id="9802617at2"/>
<dbReference type="Proteomes" id="UP000002432">
    <property type="component" value="Chromosome"/>
</dbReference>
<dbReference type="GO" id="GO:1990904">
    <property type="term" value="C:ribonucleoprotein complex"/>
    <property type="evidence" value="ECO:0007669"/>
    <property type="project" value="UniProtKB-KW"/>
</dbReference>
<dbReference type="GO" id="GO:0005840">
    <property type="term" value="C:ribosome"/>
    <property type="evidence" value="ECO:0007669"/>
    <property type="project" value="UniProtKB-KW"/>
</dbReference>
<dbReference type="GO" id="GO:0019843">
    <property type="term" value="F:rRNA binding"/>
    <property type="evidence" value="ECO:0007669"/>
    <property type="project" value="UniProtKB-UniRule"/>
</dbReference>
<dbReference type="GO" id="GO:0003735">
    <property type="term" value="F:structural constituent of ribosome"/>
    <property type="evidence" value="ECO:0007669"/>
    <property type="project" value="InterPro"/>
</dbReference>
<dbReference type="GO" id="GO:0006412">
    <property type="term" value="P:translation"/>
    <property type="evidence" value="ECO:0007669"/>
    <property type="project" value="UniProtKB-UniRule"/>
</dbReference>
<dbReference type="FunFam" id="3.30.1370.30:FF:000002">
    <property type="entry name" value="30S ribosomal protein S8"/>
    <property type="match status" value="1"/>
</dbReference>
<dbReference type="FunFam" id="3.30.1490.10:FF:000001">
    <property type="entry name" value="30S ribosomal protein S8"/>
    <property type="match status" value="1"/>
</dbReference>
<dbReference type="Gene3D" id="3.30.1370.30">
    <property type="match status" value="1"/>
</dbReference>
<dbReference type="Gene3D" id="3.30.1490.10">
    <property type="match status" value="1"/>
</dbReference>
<dbReference type="HAMAP" id="MF_01302_B">
    <property type="entry name" value="Ribosomal_uS8_B"/>
    <property type="match status" value="1"/>
</dbReference>
<dbReference type="InterPro" id="IPR000630">
    <property type="entry name" value="Ribosomal_uS8"/>
</dbReference>
<dbReference type="InterPro" id="IPR047863">
    <property type="entry name" value="Ribosomal_uS8_CS"/>
</dbReference>
<dbReference type="InterPro" id="IPR035987">
    <property type="entry name" value="Ribosomal_uS8_sf"/>
</dbReference>
<dbReference type="NCBIfam" id="NF001109">
    <property type="entry name" value="PRK00136.1"/>
    <property type="match status" value="1"/>
</dbReference>
<dbReference type="PANTHER" id="PTHR11758">
    <property type="entry name" value="40S RIBOSOMAL PROTEIN S15A"/>
    <property type="match status" value="1"/>
</dbReference>
<dbReference type="Pfam" id="PF00410">
    <property type="entry name" value="Ribosomal_S8"/>
    <property type="match status" value="1"/>
</dbReference>
<dbReference type="SUPFAM" id="SSF56047">
    <property type="entry name" value="Ribosomal protein S8"/>
    <property type="match status" value="1"/>
</dbReference>
<dbReference type="PROSITE" id="PS00053">
    <property type="entry name" value="RIBOSOMAL_S8"/>
    <property type="match status" value="1"/>
</dbReference>
<accession>Q1ISA8</accession>
<evidence type="ECO:0000255" key="1">
    <source>
        <dbReference type="HAMAP-Rule" id="MF_01302"/>
    </source>
</evidence>
<evidence type="ECO:0000305" key="2"/>
<keyword id="KW-1185">Reference proteome</keyword>
<keyword id="KW-0687">Ribonucleoprotein</keyword>
<keyword id="KW-0689">Ribosomal protein</keyword>
<keyword id="KW-0694">RNA-binding</keyword>
<keyword id="KW-0699">rRNA-binding</keyword>
<comment type="function">
    <text evidence="1">One of the primary rRNA binding proteins, it binds directly to 16S rRNA central domain where it helps coordinate assembly of the platform of the 30S subunit.</text>
</comment>
<comment type="subunit">
    <text evidence="1">Part of the 30S ribosomal subunit. Contacts proteins S5 and S12.</text>
</comment>
<comment type="similarity">
    <text evidence="1">Belongs to the universal ribosomal protein uS8 family.</text>
</comment>
<protein>
    <recommendedName>
        <fullName evidence="1">Small ribosomal subunit protein uS8</fullName>
    </recommendedName>
    <alternativeName>
        <fullName evidence="2">30S ribosomal protein S8</fullName>
    </alternativeName>
</protein>
<sequence>MSLTTDPVADFLSRVRNAIKARHQKVDAPASKLKTELARILKEEGYIANYKAVEEEGKKLIRVYLKYGSDNVSPISNVTRISRPGCRVYVGSKEIPRVLGGLGISILTTPKGVMTGRQARKEGVGGEVLCEIY</sequence>
<organism>
    <name type="scientific">Koribacter versatilis (strain Ellin345)</name>
    <dbReference type="NCBI Taxonomy" id="204669"/>
    <lineage>
        <taxon>Bacteria</taxon>
        <taxon>Pseudomonadati</taxon>
        <taxon>Acidobacteriota</taxon>
        <taxon>Terriglobia</taxon>
        <taxon>Terriglobales</taxon>
        <taxon>Candidatus Korobacteraceae</taxon>
        <taxon>Candidatus Korobacter</taxon>
    </lineage>
</organism>
<feature type="chain" id="PRO_0000290790" description="Small ribosomal subunit protein uS8">
    <location>
        <begin position="1"/>
        <end position="133"/>
    </location>
</feature>
<proteinExistence type="inferred from homology"/>
<reference key="1">
    <citation type="journal article" date="2009" name="Appl. Environ. Microbiol.">
        <title>Three genomes from the phylum Acidobacteria provide insight into the lifestyles of these microorganisms in soils.</title>
        <authorList>
            <person name="Ward N.L."/>
            <person name="Challacombe J.F."/>
            <person name="Janssen P.H."/>
            <person name="Henrissat B."/>
            <person name="Coutinho P.M."/>
            <person name="Wu M."/>
            <person name="Xie G."/>
            <person name="Haft D.H."/>
            <person name="Sait M."/>
            <person name="Badger J."/>
            <person name="Barabote R.D."/>
            <person name="Bradley B."/>
            <person name="Brettin T.S."/>
            <person name="Brinkac L.M."/>
            <person name="Bruce D."/>
            <person name="Creasy T."/>
            <person name="Daugherty S.C."/>
            <person name="Davidsen T.M."/>
            <person name="DeBoy R.T."/>
            <person name="Detter J.C."/>
            <person name="Dodson R.J."/>
            <person name="Durkin A.S."/>
            <person name="Ganapathy A."/>
            <person name="Gwinn-Giglio M."/>
            <person name="Han C.S."/>
            <person name="Khouri H."/>
            <person name="Kiss H."/>
            <person name="Kothari S.P."/>
            <person name="Madupu R."/>
            <person name="Nelson K.E."/>
            <person name="Nelson W.C."/>
            <person name="Paulsen I."/>
            <person name="Penn K."/>
            <person name="Ren Q."/>
            <person name="Rosovitz M.J."/>
            <person name="Selengut J.D."/>
            <person name="Shrivastava S."/>
            <person name="Sullivan S.A."/>
            <person name="Tapia R."/>
            <person name="Thompson L.S."/>
            <person name="Watkins K.L."/>
            <person name="Yang Q."/>
            <person name="Yu C."/>
            <person name="Zafar N."/>
            <person name="Zhou L."/>
            <person name="Kuske C.R."/>
        </authorList>
    </citation>
    <scope>NUCLEOTIDE SEQUENCE [LARGE SCALE GENOMIC DNA]</scope>
    <source>
        <strain>Ellin345</strain>
    </source>
</reference>